<feature type="chain" id="PRO_1000002124" description="SsrA-binding protein">
    <location>
        <begin position="1"/>
        <end position="157"/>
    </location>
</feature>
<feature type="region of interest" description="Disordered" evidence="2">
    <location>
        <begin position="135"/>
        <end position="157"/>
    </location>
</feature>
<dbReference type="EMBL" id="CP000267">
    <property type="protein sequence ID" value="ABD70263.1"/>
    <property type="molecule type" value="Genomic_DNA"/>
</dbReference>
<dbReference type="RefSeq" id="WP_011464831.1">
    <property type="nucleotide sequence ID" value="NC_007908.1"/>
</dbReference>
<dbReference type="SMR" id="Q21VE0"/>
<dbReference type="STRING" id="338969.Rfer_2546"/>
<dbReference type="KEGG" id="rfr:Rfer_2546"/>
<dbReference type="eggNOG" id="COG0691">
    <property type="taxonomic scope" value="Bacteria"/>
</dbReference>
<dbReference type="HOGENOM" id="CLU_108953_3_0_4"/>
<dbReference type="OrthoDB" id="9805462at2"/>
<dbReference type="Proteomes" id="UP000008332">
    <property type="component" value="Chromosome"/>
</dbReference>
<dbReference type="GO" id="GO:0005829">
    <property type="term" value="C:cytosol"/>
    <property type="evidence" value="ECO:0007669"/>
    <property type="project" value="TreeGrafter"/>
</dbReference>
<dbReference type="GO" id="GO:0003723">
    <property type="term" value="F:RNA binding"/>
    <property type="evidence" value="ECO:0007669"/>
    <property type="project" value="UniProtKB-UniRule"/>
</dbReference>
<dbReference type="GO" id="GO:0070929">
    <property type="term" value="P:trans-translation"/>
    <property type="evidence" value="ECO:0007669"/>
    <property type="project" value="UniProtKB-UniRule"/>
</dbReference>
<dbReference type="CDD" id="cd09294">
    <property type="entry name" value="SmpB"/>
    <property type="match status" value="1"/>
</dbReference>
<dbReference type="Gene3D" id="2.40.280.10">
    <property type="match status" value="1"/>
</dbReference>
<dbReference type="HAMAP" id="MF_00023">
    <property type="entry name" value="SmpB"/>
    <property type="match status" value="1"/>
</dbReference>
<dbReference type="InterPro" id="IPR023620">
    <property type="entry name" value="SmpB"/>
</dbReference>
<dbReference type="InterPro" id="IPR000037">
    <property type="entry name" value="SsrA-bd_prot"/>
</dbReference>
<dbReference type="InterPro" id="IPR020081">
    <property type="entry name" value="SsrA-bd_prot_CS"/>
</dbReference>
<dbReference type="NCBIfam" id="NF003843">
    <property type="entry name" value="PRK05422.1"/>
    <property type="match status" value="1"/>
</dbReference>
<dbReference type="NCBIfam" id="TIGR00086">
    <property type="entry name" value="smpB"/>
    <property type="match status" value="1"/>
</dbReference>
<dbReference type="PANTHER" id="PTHR30308:SF2">
    <property type="entry name" value="SSRA-BINDING PROTEIN"/>
    <property type="match status" value="1"/>
</dbReference>
<dbReference type="PANTHER" id="PTHR30308">
    <property type="entry name" value="TMRNA-BINDING COMPONENT OF TRANS-TRANSLATION TAGGING COMPLEX"/>
    <property type="match status" value="1"/>
</dbReference>
<dbReference type="Pfam" id="PF01668">
    <property type="entry name" value="SmpB"/>
    <property type="match status" value="1"/>
</dbReference>
<dbReference type="SUPFAM" id="SSF74982">
    <property type="entry name" value="Small protein B (SmpB)"/>
    <property type="match status" value="1"/>
</dbReference>
<dbReference type="PROSITE" id="PS01317">
    <property type="entry name" value="SSRP"/>
    <property type="match status" value="1"/>
</dbReference>
<sequence>MAKKPDTASRIADNKKAAYNYFFEERFEAGLVLEGWEVKSLREGKVQITDGYVVIRNGELFVIGLQINPLGTASTHISPDKQRTKKLLMHKEEIKRLIGKVEQKGYTLVPLNLHWKAGKIKCEIALAKGKAEHDKRDTIKDREGKREVERAMKTNHR</sequence>
<reference key="1">
    <citation type="submission" date="2006-02" db="EMBL/GenBank/DDBJ databases">
        <title>Complete sequence of chromosome of Rhodoferax ferrireducens DSM 15236.</title>
        <authorList>
            <person name="Copeland A."/>
            <person name="Lucas S."/>
            <person name="Lapidus A."/>
            <person name="Barry K."/>
            <person name="Detter J.C."/>
            <person name="Glavina del Rio T."/>
            <person name="Hammon N."/>
            <person name="Israni S."/>
            <person name="Pitluck S."/>
            <person name="Brettin T."/>
            <person name="Bruce D."/>
            <person name="Han C."/>
            <person name="Tapia R."/>
            <person name="Gilna P."/>
            <person name="Kiss H."/>
            <person name="Schmutz J."/>
            <person name="Larimer F."/>
            <person name="Land M."/>
            <person name="Kyrpides N."/>
            <person name="Ivanova N."/>
            <person name="Richardson P."/>
        </authorList>
    </citation>
    <scope>NUCLEOTIDE SEQUENCE [LARGE SCALE GENOMIC DNA]</scope>
    <source>
        <strain>ATCC BAA-621 / DSM 15236 / T118</strain>
    </source>
</reference>
<evidence type="ECO:0000255" key="1">
    <source>
        <dbReference type="HAMAP-Rule" id="MF_00023"/>
    </source>
</evidence>
<evidence type="ECO:0000256" key="2">
    <source>
        <dbReference type="SAM" id="MobiDB-lite"/>
    </source>
</evidence>
<name>SSRP_ALBFT</name>
<organism>
    <name type="scientific">Albidiferax ferrireducens (strain ATCC BAA-621 / DSM 15236 / T118)</name>
    <name type="common">Rhodoferax ferrireducens</name>
    <dbReference type="NCBI Taxonomy" id="338969"/>
    <lineage>
        <taxon>Bacteria</taxon>
        <taxon>Pseudomonadati</taxon>
        <taxon>Pseudomonadota</taxon>
        <taxon>Betaproteobacteria</taxon>
        <taxon>Burkholderiales</taxon>
        <taxon>Comamonadaceae</taxon>
        <taxon>Rhodoferax</taxon>
    </lineage>
</organism>
<proteinExistence type="inferred from homology"/>
<gene>
    <name evidence="1" type="primary">smpB</name>
    <name type="ordered locus">Rfer_2546</name>
</gene>
<comment type="function">
    <text evidence="1">Required for rescue of stalled ribosomes mediated by trans-translation. Binds to transfer-messenger RNA (tmRNA), required for stable association of tmRNA with ribosomes. tmRNA and SmpB together mimic tRNA shape, replacing the anticodon stem-loop with SmpB. tmRNA is encoded by the ssrA gene; the 2 termini fold to resemble tRNA(Ala) and it encodes a 'tag peptide', a short internal open reading frame. During trans-translation Ala-aminoacylated tmRNA acts like a tRNA, entering the A-site of stalled ribosomes, displacing the stalled mRNA. The ribosome then switches to translate the ORF on the tmRNA; the nascent peptide is terminated with the 'tag peptide' encoded by the tmRNA and targeted for degradation. The ribosome is freed to recommence translation, which seems to be the essential function of trans-translation.</text>
</comment>
<comment type="subcellular location">
    <subcellularLocation>
        <location evidence="1">Cytoplasm</location>
    </subcellularLocation>
    <text evidence="1">The tmRNA-SmpB complex associates with stalled 70S ribosomes.</text>
</comment>
<comment type="similarity">
    <text evidence="1">Belongs to the SmpB family.</text>
</comment>
<protein>
    <recommendedName>
        <fullName evidence="1">SsrA-binding protein</fullName>
    </recommendedName>
    <alternativeName>
        <fullName evidence="1">Small protein B</fullName>
    </alternativeName>
</protein>
<accession>Q21VE0</accession>
<keyword id="KW-0963">Cytoplasm</keyword>
<keyword id="KW-1185">Reference proteome</keyword>
<keyword id="KW-0694">RNA-binding</keyword>